<name>RRG1_YEAST</name>
<comment type="function">
    <text evidence="3 5">Essential for respiratory growth and required for mitochondrial protein synthesis. Required for vacuolar acidification.</text>
</comment>
<comment type="subcellular location">
    <subcellularLocation>
        <location evidence="1 4 6">Mitochondrion</location>
    </subcellularLocation>
</comment>
<comment type="PTM">
    <text evidence="6">N-glycosylated. Glycosylation is important for correct localization of the protein.</text>
</comment>
<comment type="miscellaneous">
    <text evidence="2">Present with 1670 molecules/cell in log phase SD medium.</text>
</comment>
<comment type="similarity">
    <text evidence="7">Belongs to the RRG1 family.</text>
</comment>
<proteinExistence type="evidence at protein level"/>
<keyword id="KW-0325">Glycoprotein</keyword>
<keyword id="KW-0496">Mitochondrion</keyword>
<keyword id="KW-1185">Reference proteome</keyword>
<reference key="1">
    <citation type="journal article" date="1996" name="Yeast">
        <title>Nucleotide sequence analysis of a 32,500 bp region of the right arm of Saccharomyces cerevisiae chromosome IV.</title>
        <authorList>
            <person name="Brandt P."/>
            <person name="Ramlow S."/>
            <person name="Otto B."/>
            <person name="Bloecker H."/>
        </authorList>
    </citation>
    <scope>NUCLEOTIDE SEQUENCE [GENOMIC DNA]</scope>
</reference>
<reference key="2">
    <citation type="journal article" date="1997" name="Nature">
        <title>The nucleotide sequence of Saccharomyces cerevisiae chromosome IV.</title>
        <authorList>
            <person name="Jacq C."/>
            <person name="Alt-Moerbe J."/>
            <person name="Andre B."/>
            <person name="Arnold W."/>
            <person name="Bahr A."/>
            <person name="Ballesta J.P.G."/>
            <person name="Bargues M."/>
            <person name="Baron L."/>
            <person name="Becker A."/>
            <person name="Biteau N."/>
            <person name="Bloecker H."/>
            <person name="Blugeon C."/>
            <person name="Boskovic J."/>
            <person name="Brandt P."/>
            <person name="Brueckner M."/>
            <person name="Buitrago M.J."/>
            <person name="Coster F."/>
            <person name="Delaveau T."/>
            <person name="del Rey F."/>
            <person name="Dujon B."/>
            <person name="Eide L.G."/>
            <person name="Garcia-Cantalejo J.M."/>
            <person name="Goffeau A."/>
            <person name="Gomez-Peris A."/>
            <person name="Granotier C."/>
            <person name="Hanemann V."/>
            <person name="Hankeln T."/>
            <person name="Hoheisel J.D."/>
            <person name="Jaeger W."/>
            <person name="Jimenez A."/>
            <person name="Jonniaux J.-L."/>
            <person name="Kraemer C."/>
            <person name="Kuester H."/>
            <person name="Laamanen P."/>
            <person name="Legros Y."/>
            <person name="Louis E.J."/>
            <person name="Moeller-Rieker S."/>
            <person name="Monnet A."/>
            <person name="Moro M."/>
            <person name="Mueller-Auer S."/>
            <person name="Nussbaumer B."/>
            <person name="Paricio N."/>
            <person name="Paulin L."/>
            <person name="Perea J."/>
            <person name="Perez-Alonso M."/>
            <person name="Perez-Ortin J.E."/>
            <person name="Pohl T.M."/>
            <person name="Prydz H."/>
            <person name="Purnelle B."/>
            <person name="Rasmussen S.W."/>
            <person name="Remacha M.A."/>
            <person name="Revuelta J.L."/>
            <person name="Rieger M."/>
            <person name="Salom D."/>
            <person name="Saluz H.P."/>
            <person name="Saiz J.E."/>
            <person name="Saren A.-M."/>
            <person name="Schaefer M."/>
            <person name="Scharfe M."/>
            <person name="Schmidt E.R."/>
            <person name="Schneider C."/>
            <person name="Scholler P."/>
            <person name="Schwarz S."/>
            <person name="Soler-Mira A."/>
            <person name="Urrestarazu L.A."/>
            <person name="Verhasselt P."/>
            <person name="Vissers S."/>
            <person name="Voet M."/>
            <person name="Volckaert G."/>
            <person name="Wagner G."/>
            <person name="Wambutt R."/>
            <person name="Wedler E."/>
            <person name="Wedler H."/>
            <person name="Woelfl S."/>
            <person name="Harris D.E."/>
            <person name="Bowman S."/>
            <person name="Brown D."/>
            <person name="Churcher C.M."/>
            <person name="Connor R."/>
            <person name="Dedman K."/>
            <person name="Gentles S."/>
            <person name="Hamlin N."/>
            <person name="Hunt S."/>
            <person name="Jones L."/>
            <person name="McDonald S."/>
            <person name="Murphy L.D."/>
            <person name="Niblett D."/>
            <person name="Odell C."/>
            <person name="Oliver K."/>
            <person name="Rajandream M.A."/>
            <person name="Richards C."/>
            <person name="Shore L."/>
            <person name="Walsh S.V."/>
            <person name="Barrell B.G."/>
            <person name="Dietrich F.S."/>
            <person name="Mulligan J.T."/>
            <person name="Allen E."/>
            <person name="Araujo R."/>
            <person name="Aviles E."/>
            <person name="Berno A."/>
            <person name="Carpenter J."/>
            <person name="Chen E."/>
            <person name="Cherry J.M."/>
            <person name="Chung E."/>
            <person name="Duncan M."/>
            <person name="Hunicke-Smith S."/>
            <person name="Hyman R.W."/>
            <person name="Komp C."/>
            <person name="Lashkari D."/>
            <person name="Lew H."/>
            <person name="Lin D."/>
            <person name="Mosedale D."/>
            <person name="Nakahara K."/>
            <person name="Namath A."/>
            <person name="Oefner P."/>
            <person name="Oh C."/>
            <person name="Petel F.X."/>
            <person name="Roberts D."/>
            <person name="Schramm S."/>
            <person name="Schroeder M."/>
            <person name="Shogren T."/>
            <person name="Shroff N."/>
            <person name="Winant A."/>
            <person name="Yelton M.A."/>
            <person name="Botstein D."/>
            <person name="Davis R.W."/>
            <person name="Johnston M."/>
            <person name="Andrews S."/>
            <person name="Brinkman R."/>
            <person name="Cooper J."/>
            <person name="Ding H."/>
            <person name="Du Z."/>
            <person name="Favello A."/>
            <person name="Fulton L."/>
            <person name="Gattung S."/>
            <person name="Greco T."/>
            <person name="Hallsworth K."/>
            <person name="Hawkins J."/>
            <person name="Hillier L.W."/>
            <person name="Jier M."/>
            <person name="Johnson D."/>
            <person name="Johnston L."/>
            <person name="Kirsten J."/>
            <person name="Kucaba T."/>
            <person name="Langston Y."/>
            <person name="Latreille P."/>
            <person name="Le T."/>
            <person name="Mardis E."/>
            <person name="Menezes S."/>
            <person name="Miller N."/>
            <person name="Nhan M."/>
            <person name="Pauley A."/>
            <person name="Peluso D."/>
            <person name="Rifkin L."/>
            <person name="Riles L."/>
            <person name="Taich A."/>
            <person name="Trevaskis E."/>
            <person name="Vignati D."/>
            <person name="Wilcox L."/>
            <person name="Wohldman P."/>
            <person name="Vaudin M."/>
            <person name="Wilson R."/>
            <person name="Waterston R."/>
            <person name="Albermann K."/>
            <person name="Hani J."/>
            <person name="Heumann K."/>
            <person name="Kleine K."/>
            <person name="Mewes H.-W."/>
            <person name="Zollner A."/>
            <person name="Zaccaria P."/>
        </authorList>
    </citation>
    <scope>NUCLEOTIDE SEQUENCE [LARGE SCALE GENOMIC DNA]</scope>
    <source>
        <strain>ATCC 204508 / S288c</strain>
    </source>
</reference>
<reference key="3">
    <citation type="journal article" date="2014" name="G3 (Bethesda)">
        <title>The reference genome sequence of Saccharomyces cerevisiae: Then and now.</title>
        <authorList>
            <person name="Engel S.R."/>
            <person name="Dietrich F.S."/>
            <person name="Fisk D.G."/>
            <person name="Binkley G."/>
            <person name="Balakrishnan R."/>
            <person name="Costanzo M.C."/>
            <person name="Dwight S.S."/>
            <person name="Hitz B.C."/>
            <person name="Karra K."/>
            <person name="Nash R.S."/>
            <person name="Weng S."/>
            <person name="Wong E.D."/>
            <person name="Lloyd P."/>
            <person name="Skrzypek M.S."/>
            <person name="Miyasato S.R."/>
            <person name="Simison M."/>
            <person name="Cherry J.M."/>
        </authorList>
    </citation>
    <scope>GENOME REANNOTATION</scope>
    <source>
        <strain>ATCC 204508 / S288c</strain>
    </source>
</reference>
<reference key="4">
    <citation type="journal article" date="2007" name="Genome Res.">
        <title>Approaching a complete repository of sequence-verified protein-encoding clones for Saccharomyces cerevisiae.</title>
        <authorList>
            <person name="Hu Y."/>
            <person name="Rolfs A."/>
            <person name="Bhullar B."/>
            <person name="Murthy T.V.S."/>
            <person name="Zhu C."/>
            <person name="Berger M.F."/>
            <person name="Camargo A.A."/>
            <person name="Kelley F."/>
            <person name="McCarron S."/>
            <person name="Jepson D."/>
            <person name="Richardson A."/>
            <person name="Raphael J."/>
            <person name="Moreira D."/>
            <person name="Taycher E."/>
            <person name="Zuo D."/>
            <person name="Mohr S."/>
            <person name="Kane M.F."/>
            <person name="Williamson J."/>
            <person name="Simpson A.J.G."/>
            <person name="Bulyk M.L."/>
            <person name="Harlow E."/>
            <person name="Marsischky G."/>
            <person name="Kolodner R.D."/>
            <person name="LaBaer J."/>
        </authorList>
    </citation>
    <scope>NUCLEOTIDE SEQUENCE [GENOMIC DNA]</scope>
    <source>
        <strain>ATCC 204508 / S288c</strain>
    </source>
</reference>
<reference key="5">
    <citation type="journal article" date="2003" name="Nature">
        <title>Global analysis of protein localization in budding yeast.</title>
        <authorList>
            <person name="Huh W.-K."/>
            <person name="Falvo J.V."/>
            <person name="Gerke L.C."/>
            <person name="Carroll A.S."/>
            <person name="Howson R.W."/>
            <person name="Weissman J.S."/>
            <person name="O'Shea E.K."/>
        </authorList>
    </citation>
    <scope>SUBCELLULAR LOCATION [LARGE SCALE ANALYSIS]</scope>
</reference>
<reference key="6">
    <citation type="journal article" date="2003" name="Nature">
        <title>Global analysis of protein expression in yeast.</title>
        <authorList>
            <person name="Ghaemmaghami S."/>
            <person name="Huh W.-K."/>
            <person name="Bower K."/>
            <person name="Howson R.W."/>
            <person name="Belle A."/>
            <person name="Dephoure N."/>
            <person name="O'Shea E.K."/>
            <person name="Weissman J.S."/>
        </authorList>
    </citation>
    <scope>LEVEL OF PROTEIN EXPRESSION [LARGE SCALE ANALYSIS]</scope>
</reference>
<reference key="7">
    <citation type="journal article" date="2005" name="Genome Biol.">
        <title>Characterization of the yeast ionome: a genome-wide analysis of nutrient mineral and trace element homeostasis in Saccharomyces cerevisiae.</title>
        <authorList>
            <person name="Eide D.J."/>
            <person name="Clark S."/>
            <person name="Nair T.M."/>
            <person name="Gehl M."/>
            <person name="Gribskov M."/>
            <person name="Guerinot M.L."/>
            <person name="Harper J.F."/>
        </authorList>
    </citation>
    <scope>FUNCTION</scope>
</reference>
<reference key="8">
    <citation type="journal article" date="2006" name="J. Proteome Res.">
        <title>Toward the complete yeast mitochondrial proteome: multidimensional separation techniques for mitochondrial proteomics.</title>
        <authorList>
            <person name="Reinders J."/>
            <person name="Zahedi R.P."/>
            <person name="Pfanner N."/>
            <person name="Meisinger C."/>
            <person name="Sickmann A."/>
        </authorList>
    </citation>
    <scope>SUBCELLULAR LOCATION [LARGE SCALE ANALYSIS]</scope>
    <scope>IDENTIFICATION BY MASS SPECTROMETRY</scope>
</reference>
<reference key="9">
    <citation type="journal article" date="2009" name="Genome Biol.">
        <title>Genome-wide deletion mutant analysis reveals genes required for respiratory growth, mitochondrial genome maintenance and mitochondrial protein synthesis in Saccharomyces cerevisiae.</title>
        <authorList>
            <person name="Merz S."/>
            <person name="Westermann B."/>
        </authorList>
    </citation>
    <scope>FUNCTION</scope>
</reference>
<reference key="10">
    <citation type="journal article" date="2009" name="Mol. Syst. Biol.">
        <title>Global analysis of the glycoproteome in Saccharomyces cerevisiae reveals new roles for protein glycosylation in eukaryotes.</title>
        <authorList>
            <person name="Kung L.A."/>
            <person name="Tao S.-C."/>
            <person name="Qian J."/>
            <person name="Smith M.G."/>
            <person name="Snyder M."/>
            <person name="Zhu H."/>
        </authorList>
    </citation>
    <scope>GLYCOSYLATION [LARGE SCALE ANALYSIS]</scope>
    <scope>SUBCELLULAR LOCATION</scope>
</reference>
<dbReference type="EMBL" id="X84162">
    <property type="protein sequence ID" value="CAA58981.1"/>
    <property type="molecule type" value="Genomic_DNA"/>
</dbReference>
<dbReference type="EMBL" id="Z49209">
    <property type="protein sequence ID" value="CAA89094.1"/>
    <property type="molecule type" value="Genomic_DNA"/>
</dbReference>
<dbReference type="EMBL" id="Z74361">
    <property type="protein sequence ID" value="CAA98883.1"/>
    <property type="molecule type" value="Genomic_DNA"/>
</dbReference>
<dbReference type="EMBL" id="AY557697">
    <property type="protein sequence ID" value="AAS56023.1"/>
    <property type="molecule type" value="Genomic_DNA"/>
</dbReference>
<dbReference type="EMBL" id="BK006938">
    <property type="protein sequence ID" value="DAA11911.1"/>
    <property type="molecule type" value="Genomic_DNA"/>
</dbReference>
<dbReference type="PIR" id="S54049">
    <property type="entry name" value="S54049"/>
</dbReference>
<dbReference type="RefSeq" id="NP_010350.3">
    <property type="nucleotide sequence ID" value="NM_001180373.3"/>
</dbReference>
<dbReference type="SMR" id="Q12167"/>
<dbReference type="BioGRID" id="32120">
    <property type="interactions" value="78"/>
</dbReference>
<dbReference type="FunCoup" id="Q12167">
    <property type="interactions" value="47"/>
</dbReference>
<dbReference type="IntAct" id="Q12167">
    <property type="interactions" value="7"/>
</dbReference>
<dbReference type="MINT" id="Q12167"/>
<dbReference type="STRING" id="4932.YDR065W"/>
<dbReference type="PaxDb" id="4932-YDR065W"/>
<dbReference type="PeptideAtlas" id="Q12167"/>
<dbReference type="EnsemblFungi" id="YDR065W_mRNA">
    <property type="protein sequence ID" value="YDR065W"/>
    <property type="gene ID" value="YDR065W"/>
</dbReference>
<dbReference type="GeneID" id="851637"/>
<dbReference type="KEGG" id="sce:YDR065W"/>
<dbReference type="AGR" id="SGD:S000002472"/>
<dbReference type="SGD" id="S000002472">
    <property type="gene designation" value="RRG1"/>
</dbReference>
<dbReference type="VEuPathDB" id="FungiDB:YDR065W"/>
<dbReference type="eggNOG" id="ENOG502RYGE">
    <property type="taxonomic scope" value="Eukaryota"/>
</dbReference>
<dbReference type="HOGENOM" id="CLU_062256_0_0_1"/>
<dbReference type="InParanoid" id="Q12167"/>
<dbReference type="OMA" id="RIWFIRS"/>
<dbReference type="OrthoDB" id="4065996at2759"/>
<dbReference type="BioCyc" id="YEAST:G3O-29672-MONOMER"/>
<dbReference type="BioGRID-ORCS" id="851637">
    <property type="hits" value="0 hits in 10 CRISPR screens"/>
</dbReference>
<dbReference type="PRO" id="PR:Q12167"/>
<dbReference type="Proteomes" id="UP000002311">
    <property type="component" value="Chromosome IV"/>
</dbReference>
<dbReference type="RNAct" id="Q12167">
    <property type="molecule type" value="protein"/>
</dbReference>
<dbReference type="GO" id="GO:0099617">
    <property type="term" value="C:matrix side of mitochondrial inner membrane"/>
    <property type="evidence" value="ECO:0000314"/>
    <property type="project" value="SGD"/>
</dbReference>
<dbReference type="GO" id="GO:0005739">
    <property type="term" value="C:mitochondrion"/>
    <property type="evidence" value="ECO:0007005"/>
    <property type="project" value="SGD"/>
</dbReference>
<dbReference type="GO" id="GO:0000002">
    <property type="term" value="P:mitochondrial genome maintenance"/>
    <property type="evidence" value="ECO:0000315"/>
    <property type="project" value="SGD"/>
</dbReference>
<dbReference type="GO" id="GO:0097745">
    <property type="term" value="P:mitochondrial tRNA 5'-end processing"/>
    <property type="evidence" value="ECO:0000315"/>
    <property type="project" value="SGD"/>
</dbReference>
<dbReference type="GO" id="GO:0007035">
    <property type="term" value="P:vacuolar acidification"/>
    <property type="evidence" value="ECO:0000315"/>
    <property type="project" value="SGD"/>
</dbReference>
<evidence type="ECO:0000269" key="1">
    <source>
    </source>
</evidence>
<evidence type="ECO:0000269" key="2">
    <source>
    </source>
</evidence>
<evidence type="ECO:0000269" key="3">
    <source>
    </source>
</evidence>
<evidence type="ECO:0000269" key="4">
    <source>
    </source>
</evidence>
<evidence type="ECO:0000269" key="5">
    <source>
    </source>
</evidence>
<evidence type="ECO:0000269" key="6">
    <source>
    </source>
</evidence>
<evidence type="ECO:0000305" key="7"/>
<gene>
    <name type="primary">RRG1</name>
    <name type="ordered locus">YDR065W</name>
    <name type="ORF">D4258</name>
</gene>
<sequence length="365" mass="42829">MAQNFGKIPSHKSYVLSLYRTVLRNIPKCCHSYAFQYEIKKTLSIQLFKHKHDKSSWSVYTLLNEFSLLNNCLLEGKLQEIKNLMKPLKKMKKQLKTTKILNSLTSLGDVKTNDPEEVRRFHVLSAYIKRKQDLGLLPAYIPKTYQHKLLLPLALNEHACLKLFHIQQKLKNGPPSAGLSYTKEGRNQIWFVRSPINKGRQQSKKLGILIRKERKDSQKNIDNLNFCEINAAWALHEAIWEEYLESKKIIKVNLPKYLEYAANIPKSTKCNPSSQYQKVKEWVDPVREIMFELHSKSFQRVEYFNKYKEKLLKNGGQLAYFDKKSKEMYAKRLTLFRKMSKETLPYVTLFIEGRDLPSVLAKYGF</sequence>
<protein>
    <recommendedName>
        <fullName>Required for respiratory growth protein 1, mitochondrial</fullName>
    </recommendedName>
</protein>
<feature type="chain" id="PRO_0000244438" description="Required for respiratory growth protein 1, mitochondrial">
    <location>
        <begin position="1"/>
        <end position="365"/>
    </location>
</feature>
<feature type="sequence conflict" description="In Ref. 2; AAS56023." evidence="7" ref="2">
    <original>G</original>
    <variation>D</variation>
    <location>
        <position position="364"/>
    </location>
</feature>
<organism>
    <name type="scientific">Saccharomyces cerevisiae (strain ATCC 204508 / S288c)</name>
    <name type="common">Baker's yeast</name>
    <dbReference type="NCBI Taxonomy" id="559292"/>
    <lineage>
        <taxon>Eukaryota</taxon>
        <taxon>Fungi</taxon>
        <taxon>Dikarya</taxon>
        <taxon>Ascomycota</taxon>
        <taxon>Saccharomycotina</taxon>
        <taxon>Saccharomycetes</taxon>
        <taxon>Saccharomycetales</taxon>
        <taxon>Saccharomycetaceae</taxon>
        <taxon>Saccharomyces</taxon>
    </lineage>
</organism>
<accession>Q12167</accession>
<accession>D6VS51</accession>
<accession>Q6Q5U4</accession>